<organism>
    <name type="scientific">Canis lupus familiaris</name>
    <name type="common">Dog</name>
    <name type="synonym">Canis familiaris</name>
    <dbReference type="NCBI Taxonomy" id="9615"/>
    <lineage>
        <taxon>Eukaryota</taxon>
        <taxon>Metazoa</taxon>
        <taxon>Chordata</taxon>
        <taxon>Craniata</taxon>
        <taxon>Vertebrata</taxon>
        <taxon>Euteleostomi</taxon>
        <taxon>Mammalia</taxon>
        <taxon>Eutheria</taxon>
        <taxon>Laurasiatheria</taxon>
        <taxon>Carnivora</taxon>
        <taxon>Caniformia</taxon>
        <taxon>Canidae</taxon>
        <taxon>Canis</taxon>
    </lineage>
</organism>
<keyword id="KW-1003">Cell membrane</keyword>
<keyword id="KW-0966">Cell projection</keyword>
<keyword id="KW-0968">Cytoplasmic vesicle</keyword>
<keyword id="KW-0254">Endocytosis</keyword>
<keyword id="KW-0967">Endosome</keyword>
<keyword id="KW-0342">GTP-binding</keyword>
<keyword id="KW-0449">Lipoprotein</keyword>
<keyword id="KW-0472">Membrane</keyword>
<keyword id="KW-0547">Nucleotide-binding</keyword>
<keyword id="KW-0636">Prenylation</keyword>
<keyword id="KW-0653">Protein transport</keyword>
<keyword id="KW-1185">Reference proteome</keyword>
<keyword id="KW-0813">Transport</keyword>
<comment type="function">
    <text evidence="3 5 6">Plays a role in endocytosis and intracellular protein transport (PubMed:11870209, PubMed:16537905). Mediates trafficking of TF from early endosomes to recycling endosomes (PubMed:16537905). Required for NGF-mediated endocytosis of NTRK1, and subsequent neurite outgrowth (By similarity). Binds GTP and GDP and has low GTPase activity. Alternates between a GTP-bound active form and a GDP-bound inactive form (PubMed:11870209).</text>
</comment>
<comment type="subunit">
    <text evidence="2 3 5">Interacts directly with ZFYVE20 (By similarity). Interacts (in its GTP-bound form) with RINL and RABGEF1 (By similarity). Binds EEA1 (PubMed:11870209).</text>
</comment>
<comment type="subcellular location">
    <subcellularLocation>
        <location evidence="7">Endosome membrane</location>
        <topology evidence="8">Lipid-anchor</topology>
    </subcellularLocation>
    <subcellularLocation>
        <location evidence="5 7">Cell membrane</location>
        <topology evidence="8">Lipid-anchor</topology>
    </subcellularLocation>
    <subcellularLocation>
        <location evidence="5 6 7">Early endosome</location>
    </subcellularLocation>
    <subcellularLocation>
        <location evidence="7">Late endosome</location>
    </subcellularLocation>
    <subcellularLocation>
        <location evidence="3">Cell projection</location>
        <location evidence="3">Ruffle</location>
    </subcellularLocation>
    <subcellularLocation>
        <location evidence="7">Cytoplasmic vesicle</location>
    </subcellularLocation>
    <subcellularLocation>
        <location evidence="3">Cytoplasmic vesicle</location>
        <location evidence="3">Phagosome</location>
    </subcellularLocation>
    <subcellularLocation>
        <location evidence="8">Cytoplasmic vesicle</location>
        <location evidence="8">Phagosome membrane</location>
        <topology evidence="8">Lipid-anchor</topology>
        <orientation evidence="8">Cytoplasmic side</orientation>
    </subcellularLocation>
    <text evidence="3">Recruited to phagosomes containing S.aureus or Mycobacterium.</text>
</comment>
<comment type="similarity">
    <text evidence="8">Belongs to the small GTPase superfamily. Rab family.</text>
</comment>
<reference key="1">
    <citation type="journal article" date="1993" name="J. Cell Sci.">
        <title>Molecular cloning and subcellular localization of three GTP-binding proteins of the rab subfamily.</title>
        <authorList>
            <person name="Olkkonen V.M."/>
            <person name="Dupree P."/>
            <person name="Killisch I."/>
            <person name="Luetcke A."/>
            <person name="Simons K."/>
            <person name="Zerial M."/>
        </authorList>
    </citation>
    <scope>NUCLEOTIDE SEQUENCE [MRNA]</scope>
    <scope>SUBCELLULAR LOCATION</scope>
</reference>
<reference key="2">
    <citation type="submission" date="1998-06" db="EMBL/GenBank/DDBJ databases">
        <authorList>
            <person name="Olkkonen V.M."/>
        </authorList>
    </citation>
    <scope>SEQUENCE REVISION</scope>
</reference>
<reference key="3">
    <citation type="journal article" date="2002" name="J. Cell Sci.">
        <title>The small GTPase Rab22 interacts with EEA1 and controls endosomal membrane trafficking.</title>
        <authorList>
            <person name="Kauppi M."/>
            <person name="Simonsen A."/>
            <person name="Bremnes B."/>
            <person name="Vieira A."/>
            <person name="Callaghan J.M."/>
            <person name="Stenmark H."/>
            <person name="Olkkonen V.M."/>
        </authorList>
    </citation>
    <scope>FUNCTION</scope>
    <scope>INTERACTION WITH EEA1</scope>
    <scope>SUBCELLULAR LOCATION</scope>
    <scope>MUTAGENESIS OF GLN-64</scope>
</reference>
<reference key="4">
    <citation type="journal article" date="2006" name="Mol. Cell. Biol.">
        <title>Rab22a regulates the sorting of transferrin to recycling endosomes.</title>
        <authorList>
            <person name="Magadan J.G."/>
            <person name="Barbieri M.A."/>
            <person name="Mesa R."/>
            <person name="Stahl P.D."/>
            <person name="Mayorga L.S."/>
        </authorList>
    </citation>
    <scope>FUNCTION</scope>
    <scope>SUBCELLULAR LOCATION</scope>
</reference>
<gene>
    <name type="primary">RAB22A</name>
    <name type="synonym">RAB22</name>
</gene>
<dbReference type="EMBL" id="Z22820">
    <property type="protein sequence ID" value="CAA80473.1"/>
    <property type="molecule type" value="mRNA"/>
</dbReference>
<dbReference type="PIR" id="S40208">
    <property type="entry name" value="S40208"/>
</dbReference>
<dbReference type="RefSeq" id="NP_001003208.1">
    <property type="nucleotide sequence ID" value="NM_001003208.1"/>
</dbReference>
<dbReference type="SMR" id="P51154"/>
<dbReference type="FunCoup" id="P51154">
    <property type="interactions" value="553"/>
</dbReference>
<dbReference type="STRING" id="9615.ENSCAFP00000064006"/>
<dbReference type="PaxDb" id="9612-ENSCAFP00000017821"/>
<dbReference type="GeneID" id="403864"/>
<dbReference type="KEGG" id="cfa:403864"/>
<dbReference type="CTD" id="57403"/>
<dbReference type="eggNOG" id="KOG0092">
    <property type="taxonomic scope" value="Eukaryota"/>
</dbReference>
<dbReference type="InParanoid" id="P51154"/>
<dbReference type="OrthoDB" id="63533at2759"/>
<dbReference type="Proteomes" id="UP000002254">
    <property type="component" value="Unplaced"/>
</dbReference>
<dbReference type="Proteomes" id="UP000694429">
    <property type="component" value="Unplaced"/>
</dbReference>
<dbReference type="Proteomes" id="UP000694542">
    <property type="component" value="Unplaced"/>
</dbReference>
<dbReference type="Proteomes" id="UP000805418">
    <property type="component" value="Unplaced"/>
</dbReference>
<dbReference type="GO" id="GO:0005769">
    <property type="term" value="C:early endosome"/>
    <property type="evidence" value="ECO:0000318"/>
    <property type="project" value="GO_Central"/>
</dbReference>
<dbReference type="GO" id="GO:0012505">
    <property type="term" value="C:endomembrane system"/>
    <property type="evidence" value="ECO:0000318"/>
    <property type="project" value="GO_Central"/>
</dbReference>
<dbReference type="GO" id="GO:0010008">
    <property type="term" value="C:endosome membrane"/>
    <property type="evidence" value="ECO:0007669"/>
    <property type="project" value="UniProtKB-SubCell"/>
</dbReference>
<dbReference type="GO" id="GO:0005770">
    <property type="term" value="C:late endosome"/>
    <property type="evidence" value="ECO:0007669"/>
    <property type="project" value="UniProtKB-SubCell"/>
</dbReference>
<dbReference type="GO" id="GO:0045335">
    <property type="term" value="C:phagocytic vesicle"/>
    <property type="evidence" value="ECO:0000250"/>
    <property type="project" value="UniProtKB"/>
</dbReference>
<dbReference type="GO" id="GO:0030670">
    <property type="term" value="C:phagocytic vesicle membrane"/>
    <property type="evidence" value="ECO:0007669"/>
    <property type="project" value="UniProtKB-SubCell"/>
</dbReference>
<dbReference type="GO" id="GO:0005886">
    <property type="term" value="C:plasma membrane"/>
    <property type="evidence" value="ECO:0007669"/>
    <property type="project" value="UniProtKB-SubCell"/>
</dbReference>
<dbReference type="GO" id="GO:0001726">
    <property type="term" value="C:ruffle"/>
    <property type="evidence" value="ECO:0007669"/>
    <property type="project" value="UniProtKB-SubCell"/>
</dbReference>
<dbReference type="GO" id="GO:0019003">
    <property type="term" value="F:GDP binding"/>
    <property type="evidence" value="ECO:0000250"/>
    <property type="project" value="UniProtKB"/>
</dbReference>
<dbReference type="GO" id="GO:0005525">
    <property type="term" value="F:GTP binding"/>
    <property type="evidence" value="ECO:0007669"/>
    <property type="project" value="UniProtKB-KW"/>
</dbReference>
<dbReference type="GO" id="GO:0003924">
    <property type="term" value="F:GTPase activity"/>
    <property type="evidence" value="ECO:0000318"/>
    <property type="project" value="GO_Central"/>
</dbReference>
<dbReference type="GO" id="GO:0006897">
    <property type="term" value="P:endocytosis"/>
    <property type="evidence" value="ECO:0000318"/>
    <property type="project" value="GO_Central"/>
</dbReference>
<dbReference type="GO" id="GO:0006886">
    <property type="term" value="P:intracellular protein transport"/>
    <property type="evidence" value="ECO:0000318"/>
    <property type="project" value="GO_Central"/>
</dbReference>
<dbReference type="CDD" id="cd01860">
    <property type="entry name" value="Rab5_related"/>
    <property type="match status" value="1"/>
</dbReference>
<dbReference type="FunFam" id="3.40.50.300:FF:000346">
    <property type="entry name" value="RAB31, member RAS oncogene family"/>
    <property type="match status" value="1"/>
</dbReference>
<dbReference type="Gene3D" id="3.40.50.300">
    <property type="entry name" value="P-loop containing nucleotide triphosphate hydrolases"/>
    <property type="match status" value="1"/>
</dbReference>
<dbReference type="InterPro" id="IPR027417">
    <property type="entry name" value="P-loop_NTPase"/>
</dbReference>
<dbReference type="InterPro" id="IPR005225">
    <property type="entry name" value="Small_GTP-bd"/>
</dbReference>
<dbReference type="InterPro" id="IPR001806">
    <property type="entry name" value="Small_GTPase"/>
</dbReference>
<dbReference type="NCBIfam" id="TIGR00231">
    <property type="entry name" value="small_GTP"/>
    <property type="match status" value="1"/>
</dbReference>
<dbReference type="PANTHER" id="PTHR47978">
    <property type="match status" value="1"/>
</dbReference>
<dbReference type="Pfam" id="PF00071">
    <property type="entry name" value="Ras"/>
    <property type="match status" value="1"/>
</dbReference>
<dbReference type="PRINTS" id="PR00449">
    <property type="entry name" value="RASTRNSFRMNG"/>
</dbReference>
<dbReference type="SMART" id="SM00175">
    <property type="entry name" value="RAB"/>
    <property type="match status" value="1"/>
</dbReference>
<dbReference type="SMART" id="SM00176">
    <property type="entry name" value="RAN"/>
    <property type="match status" value="1"/>
</dbReference>
<dbReference type="SMART" id="SM00173">
    <property type="entry name" value="RAS"/>
    <property type="match status" value="1"/>
</dbReference>
<dbReference type="SMART" id="SM00174">
    <property type="entry name" value="RHO"/>
    <property type="match status" value="1"/>
</dbReference>
<dbReference type="SUPFAM" id="SSF52540">
    <property type="entry name" value="P-loop containing nucleoside triphosphate hydrolases"/>
    <property type="match status" value="1"/>
</dbReference>
<dbReference type="PROSITE" id="PS51419">
    <property type="entry name" value="RAB"/>
    <property type="match status" value="1"/>
</dbReference>
<protein>
    <recommendedName>
        <fullName>Ras-related protein Rab-22A</fullName>
        <shortName>Rab-22</shortName>
    </recommendedName>
</protein>
<name>RB22A_CANLF</name>
<feature type="chain" id="PRO_0000121208" description="Ras-related protein Rab-22A">
    <location>
        <begin position="1"/>
        <end position="194"/>
    </location>
</feature>
<feature type="region of interest" description="Disordered" evidence="4">
    <location>
        <begin position="170"/>
        <end position="194"/>
    </location>
</feature>
<feature type="short sequence motif" description="Effector region" evidence="1">
    <location>
        <begin position="34"/>
        <end position="42"/>
    </location>
</feature>
<feature type="binding site" evidence="1">
    <location>
        <begin position="12"/>
        <end position="20"/>
    </location>
    <ligand>
        <name>GTP</name>
        <dbReference type="ChEBI" id="CHEBI:37565"/>
    </ligand>
</feature>
<feature type="binding site" evidence="1">
    <location>
        <begin position="60"/>
        <end position="64"/>
    </location>
    <ligand>
        <name>GTP</name>
        <dbReference type="ChEBI" id="CHEBI:37565"/>
    </ligand>
</feature>
<feature type="binding site" evidence="1">
    <location>
        <begin position="118"/>
        <end position="121"/>
    </location>
    <ligand>
        <name>GTP</name>
        <dbReference type="ChEBI" id="CHEBI:37565"/>
    </ligand>
</feature>
<feature type="binding site" evidence="1">
    <location>
        <begin position="148"/>
        <end position="150"/>
    </location>
    <ligand>
        <name>GTP</name>
        <dbReference type="ChEBI" id="CHEBI:37565"/>
    </ligand>
</feature>
<feature type="lipid moiety-binding region" description="S-geranylgeranyl cysteine" evidence="1">
    <location>
        <position position="193"/>
    </location>
</feature>
<feature type="lipid moiety-binding region" description="S-geranylgeranyl cysteine" evidence="1">
    <location>
        <position position="194"/>
    </location>
</feature>
<feature type="mutagenesis site" description="Impairs normal protein trafficking through early endosomes." evidence="5">
    <original>Q</original>
    <variation>L</variation>
    <location>
        <position position="64"/>
    </location>
</feature>
<accession>P51154</accession>
<sequence length="194" mass="21724">MALRELKVCLLGDTGVGKSSIVWRFVEDSFDPNINPTIGASFMTKTVQYQNELHKFLIWDTAGQEAFRALAPMYYRGSAAAIIVYDITKEETFSTLKNWVKELRQHGPPNIVVAIAGNKCDLIDVREVMERDAKDYADSIHAIFVETSAKNAININELFIEISRRIPSADANPPSGGKGFKLRRQPSEPQRSCC</sequence>
<proteinExistence type="evidence at protein level"/>
<evidence type="ECO:0000250" key="1"/>
<evidence type="ECO:0000250" key="2">
    <source>
        <dbReference type="UniProtKB" id="P35285"/>
    </source>
</evidence>
<evidence type="ECO:0000250" key="3">
    <source>
        <dbReference type="UniProtKB" id="Q9UL26"/>
    </source>
</evidence>
<evidence type="ECO:0000256" key="4">
    <source>
        <dbReference type="SAM" id="MobiDB-lite"/>
    </source>
</evidence>
<evidence type="ECO:0000269" key="5">
    <source>
    </source>
</evidence>
<evidence type="ECO:0000269" key="6">
    <source>
    </source>
</evidence>
<evidence type="ECO:0000269" key="7">
    <source>
    </source>
</evidence>
<evidence type="ECO:0000305" key="8"/>